<reference key="1">
    <citation type="submission" date="2009-07" db="EMBL/GenBank/DDBJ databases">
        <title>Complete sequence of Geobacter sp. M21.</title>
        <authorList>
            <consortium name="US DOE Joint Genome Institute"/>
            <person name="Lucas S."/>
            <person name="Copeland A."/>
            <person name="Lapidus A."/>
            <person name="Glavina del Rio T."/>
            <person name="Dalin E."/>
            <person name="Tice H."/>
            <person name="Bruce D."/>
            <person name="Goodwin L."/>
            <person name="Pitluck S."/>
            <person name="Saunders E."/>
            <person name="Brettin T."/>
            <person name="Detter J.C."/>
            <person name="Han C."/>
            <person name="Larimer F."/>
            <person name="Land M."/>
            <person name="Hauser L."/>
            <person name="Kyrpides N."/>
            <person name="Ovchinnikova G."/>
            <person name="Lovley D."/>
        </authorList>
    </citation>
    <scope>NUCLEOTIDE SEQUENCE [LARGE SCALE GENOMIC DNA]</scope>
    <source>
        <strain>M21</strain>
    </source>
</reference>
<accession>C6E557</accession>
<organism>
    <name type="scientific">Geobacter sp. (strain M21)</name>
    <dbReference type="NCBI Taxonomy" id="443144"/>
    <lineage>
        <taxon>Bacteria</taxon>
        <taxon>Pseudomonadati</taxon>
        <taxon>Thermodesulfobacteriota</taxon>
        <taxon>Desulfuromonadia</taxon>
        <taxon>Geobacterales</taxon>
        <taxon>Geobacteraceae</taxon>
        <taxon>Geobacter</taxon>
    </lineage>
</organism>
<keyword id="KW-0963">Cytoplasm</keyword>
<keyword id="KW-0274">FAD</keyword>
<keyword id="KW-0285">Flavoprotein</keyword>
<keyword id="KW-0489">Methyltransferase</keyword>
<keyword id="KW-0520">NAD</keyword>
<keyword id="KW-0521">NADP</keyword>
<keyword id="KW-0808">Transferase</keyword>
<keyword id="KW-0819">tRNA processing</keyword>
<sequence length="435" mass="47749">MTQQITVIGGGLAGCEAAWQAAKRGVKVRLFEMKPNCYSEAHHLPGLSELVCSNSLRGDSLENAVGLLKEELRRLESLFMEGAEATKVPAGGALAVDRDLFSQYITSRIESHPLIEVVREEVTRIPEEGIVVLASGPLTAGLLAQEIGRLAGSYLYFYDAIAPIVAADSIDYGKAFRASRYGKGDGDDYVNCPMDEEQYQAFVREILAAEKVEPKSFEKVVHFEGCMPIEEMASRGPETLRFGPMKPVGLVDPRVGVEPHAVIQLRQENLEATMYNLVGFQTKLTWPEQKRIFRMIPGLENAQFLRLGSMHRNTFINAPELLMATCQLKSDQRIFFAGQITGVEGYVESASSGFAVGVNAARLSKGEGLVVPPAETAIGALARHITNTEAAHFQPMNVNYGLFPPLPGRIKKKEKRGLLAQRGLEALEMWLPELS</sequence>
<gene>
    <name evidence="1" type="primary">trmFO</name>
    <name type="ordered locus">GM21_1530</name>
</gene>
<name>TRMFO_GEOSM</name>
<evidence type="ECO:0000255" key="1">
    <source>
        <dbReference type="HAMAP-Rule" id="MF_01037"/>
    </source>
</evidence>
<proteinExistence type="inferred from homology"/>
<protein>
    <recommendedName>
        <fullName evidence="1">Methylenetetrahydrofolate--tRNA-(uracil-5-)-methyltransferase TrmFO</fullName>
        <ecNumber evidence="1">2.1.1.74</ecNumber>
    </recommendedName>
    <alternativeName>
        <fullName evidence="1">Folate-dependent tRNA (uracil-5-)-methyltransferase</fullName>
    </alternativeName>
    <alternativeName>
        <fullName evidence="1">Folate-dependent tRNA(M-5-U54)-methyltransferase</fullName>
    </alternativeName>
</protein>
<dbReference type="EC" id="2.1.1.74" evidence="1"/>
<dbReference type="EMBL" id="CP001661">
    <property type="protein sequence ID" value="ACT17586.1"/>
    <property type="molecule type" value="Genomic_DNA"/>
</dbReference>
<dbReference type="SMR" id="C6E557"/>
<dbReference type="STRING" id="443144.GM21_1530"/>
<dbReference type="KEGG" id="gem:GM21_1530"/>
<dbReference type="eggNOG" id="COG1206">
    <property type="taxonomic scope" value="Bacteria"/>
</dbReference>
<dbReference type="HOGENOM" id="CLU_033057_1_0_7"/>
<dbReference type="OrthoDB" id="9803114at2"/>
<dbReference type="GO" id="GO:0005829">
    <property type="term" value="C:cytosol"/>
    <property type="evidence" value="ECO:0007669"/>
    <property type="project" value="TreeGrafter"/>
</dbReference>
<dbReference type="GO" id="GO:0050660">
    <property type="term" value="F:flavin adenine dinucleotide binding"/>
    <property type="evidence" value="ECO:0007669"/>
    <property type="project" value="UniProtKB-UniRule"/>
</dbReference>
<dbReference type="GO" id="GO:0047151">
    <property type="term" value="F:tRNA (uracil(54)-C5)-methyltransferase activity, 5,10-methylenetetrahydrofolate-dependent"/>
    <property type="evidence" value="ECO:0007669"/>
    <property type="project" value="UniProtKB-UniRule"/>
</dbReference>
<dbReference type="GO" id="GO:0030488">
    <property type="term" value="P:tRNA methylation"/>
    <property type="evidence" value="ECO:0007669"/>
    <property type="project" value="TreeGrafter"/>
</dbReference>
<dbReference type="GO" id="GO:0002098">
    <property type="term" value="P:tRNA wobble uridine modification"/>
    <property type="evidence" value="ECO:0007669"/>
    <property type="project" value="TreeGrafter"/>
</dbReference>
<dbReference type="Gene3D" id="3.50.50.60">
    <property type="entry name" value="FAD/NAD(P)-binding domain"/>
    <property type="match status" value="2"/>
</dbReference>
<dbReference type="HAMAP" id="MF_01037">
    <property type="entry name" value="TrmFO"/>
    <property type="match status" value="1"/>
</dbReference>
<dbReference type="InterPro" id="IPR036188">
    <property type="entry name" value="FAD/NAD-bd_sf"/>
</dbReference>
<dbReference type="InterPro" id="IPR002218">
    <property type="entry name" value="MnmG-rel"/>
</dbReference>
<dbReference type="InterPro" id="IPR040131">
    <property type="entry name" value="MnmG_N"/>
</dbReference>
<dbReference type="InterPro" id="IPR004417">
    <property type="entry name" value="TrmFO"/>
</dbReference>
<dbReference type="NCBIfam" id="TIGR00137">
    <property type="entry name" value="gid_trmFO"/>
    <property type="match status" value="1"/>
</dbReference>
<dbReference type="NCBIfam" id="NF003739">
    <property type="entry name" value="PRK05335.1"/>
    <property type="match status" value="1"/>
</dbReference>
<dbReference type="PANTHER" id="PTHR11806">
    <property type="entry name" value="GLUCOSE INHIBITED DIVISION PROTEIN A"/>
    <property type="match status" value="1"/>
</dbReference>
<dbReference type="PANTHER" id="PTHR11806:SF2">
    <property type="entry name" value="METHYLENETETRAHYDROFOLATE--TRNA-(URACIL-5-)-METHYLTRANSFERASE TRMFO"/>
    <property type="match status" value="1"/>
</dbReference>
<dbReference type="Pfam" id="PF01134">
    <property type="entry name" value="GIDA"/>
    <property type="match status" value="1"/>
</dbReference>
<dbReference type="SUPFAM" id="SSF51905">
    <property type="entry name" value="FAD/NAD(P)-binding domain"/>
    <property type="match status" value="1"/>
</dbReference>
<feature type="chain" id="PRO_1000213383" description="Methylenetetrahydrofolate--tRNA-(uracil-5-)-methyltransferase TrmFO">
    <location>
        <begin position="1"/>
        <end position="435"/>
    </location>
</feature>
<feature type="binding site" evidence="1">
    <location>
        <begin position="9"/>
        <end position="14"/>
    </location>
    <ligand>
        <name>FAD</name>
        <dbReference type="ChEBI" id="CHEBI:57692"/>
    </ligand>
</feature>
<comment type="function">
    <text evidence="1">Catalyzes the folate-dependent formation of 5-methyl-uridine at position 54 (M-5-U54) in all tRNAs.</text>
</comment>
<comment type="catalytic activity">
    <reaction evidence="1">
        <text>uridine(54) in tRNA + (6R)-5,10-methylene-5,6,7,8-tetrahydrofolate + NADH + H(+) = 5-methyluridine(54) in tRNA + (6S)-5,6,7,8-tetrahydrofolate + NAD(+)</text>
        <dbReference type="Rhea" id="RHEA:16873"/>
        <dbReference type="Rhea" id="RHEA-COMP:10167"/>
        <dbReference type="Rhea" id="RHEA-COMP:10193"/>
        <dbReference type="ChEBI" id="CHEBI:15378"/>
        <dbReference type="ChEBI" id="CHEBI:15636"/>
        <dbReference type="ChEBI" id="CHEBI:57453"/>
        <dbReference type="ChEBI" id="CHEBI:57540"/>
        <dbReference type="ChEBI" id="CHEBI:57945"/>
        <dbReference type="ChEBI" id="CHEBI:65315"/>
        <dbReference type="ChEBI" id="CHEBI:74447"/>
        <dbReference type="EC" id="2.1.1.74"/>
    </reaction>
</comment>
<comment type="catalytic activity">
    <reaction evidence="1">
        <text>uridine(54) in tRNA + (6R)-5,10-methylene-5,6,7,8-tetrahydrofolate + NADPH + H(+) = 5-methyluridine(54) in tRNA + (6S)-5,6,7,8-tetrahydrofolate + NADP(+)</text>
        <dbReference type="Rhea" id="RHEA:62372"/>
        <dbReference type="Rhea" id="RHEA-COMP:10167"/>
        <dbReference type="Rhea" id="RHEA-COMP:10193"/>
        <dbReference type="ChEBI" id="CHEBI:15378"/>
        <dbReference type="ChEBI" id="CHEBI:15636"/>
        <dbReference type="ChEBI" id="CHEBI:57453"/>
        <dbReference type="ChEBI" id="CHEBI:57783"/>
        <dbReference type="ChEBI" id="CHEBI:58349"/>
        <dbReference type="ChEBI" id="CHEBI:65315"/>
        <dbReference type="ChEBI" id="CHEBI:74447"/>
        <dbReference type="EC" id="2.1.1.74"/>
    </reaction>
</comment>
<comment type="cofactor">
    <cofactor evidence="1">
        <name>FAD</name>
        <dbReference type="ChEBI" id="CHEBI:57692"/>
    </cofactor>
</comment>
<comment type="subcellular location">
    <subcellularLocation>
        <location evidence="1">Cytoplasm</location>
    </subcellularLocation>
</comment>
<comment type="similarity">
    <text evidence="1">Belongs to the MnmG family. TrmFO subfamily.</text>
</comment>